<keyword id="KW-0472">Membrane</keyword>
<keyword id="KW-0496">Mitochondrion</keyword>
<keyword id="KW-0999">Mitochondrion inner membrane</keyword>
<keyword id="KW-1185">Reference proteome</keyword>
<keyword id="KW-0809">Transit peptide</keyword>
<keyword id="KW-0812">Transmembrane</keyword>
<keyword id="KW-1133">Transmembrane helix</keyword>
<evidence type="ECO:0000250" key="1">
    <source>
        <dbReference type="UniProtKB" id="Q9NX00"/>
    </source>
</evidence>
<evidence type="ECO:0000255" key="2"/>
<evidence type="ECO:0000256" key="3">
    <source>
        <dbReference type="SAM" id="MobiDB-lite"/>
    </source>
</evidence>
<evidence type="ECO:0000305" key="4"/>
<name>TM160_DANRE</name>
<accession>B3DJK0</accession>
<comment type="subcellular location">
    <subcellularLocation>
        <location evidence="1">Mitochondrion inner membrane</location>
        <topology evidence="2">Multi-pass membrane protein</topology>
    </subcellularLocation>
</comment>
<comment type="similarity">
    <text evidence="4">Belongs to the TMEM160 family.</text>
</comment>
<dbReference type="EMBL" id="BC163511">
    <property type="protein sequence ID" value="AAI63511.1"/>
    <property type="molecule type" value="mRNA"/>
</dbReference>
<dbReference type="RefSeq" id="NP_001122172.1">
    <property type="nucleotide sequence ID" value="NM_001128700.1"/>
</dbReference>
<dbReference type="FunCoup" id="B3DJK0">
    <property type="interactions" value="477"/>
</dbReference>
<dbReference type="STRING" id="7955.ENSDARP00000121630"/>
<dbReference type="PaxDb" id="7955-ENSDARP00000121630"/>
<dbReference type="PeptideAtlas" id="B3DJK0"/>
<dbReference type="GeneID" id="559491"/>
<dbReference type="KEGG" id="dre:559491"/>
<dbReference type="AGR" id="ZFIN:ZDB-GENE-060503-851"/>
<dbReference type="CTD" id="54958"/>
<dbReference type="ZFIN" id="ZDB-GENE-060503-851">
    <property type="gene designation" value="tmem160"/>
</dbReference>
<dbReference type="eggNOG" id="ENOG502S3E7">
    <property type="taxonomic scope" value="Eukaryota"/>
</dbReference>
<dbReference type="InParanoid" id="B3DJK0"/>
<dbReference type="OrthoDB" id="9944412at2759"/>
<dbReference type="PhylomeDB" id="B3DJK0"/>
<dbReference type="TreeFam" id="TF338764"/>
<dbReference type="PRO" id="PR:B3DJK0"/>
<dbReference type="Proteomes" id="UP000000437">
    <property type="component" value="Chromosome 15"/>
</dbReference>
<dbReference type="GO" id="GO:0005743">
    <property type="term" value="C:mitochondrial inner membrane"/>
    <property type="evidence" value="ECO:0000250"/>
    <property type="project" value="UniProtKB"/>
</dbReference>
<dbReference type="InterPro" id="IPR026801">
    <property type="entry name" value="TMEM160"/>
</dbReference>
<dbReference type="PANTHER" id="PTHR16236">
    <property type="entry name" value="TRANSMEMBRANE PROTEIN 160"/>
    <property type="match status" value="1"/>
</dbReference>
<dbReference type="PANTHER" id="PTHR16236:SF0">
    <property type="entry name" value="TRANSMEMBRANE PROTEIN 160"/>
    <property type="match status" value="1"/>
</dbReference>
<sequence>MASIRWLMGSRLSRFVCPFAQLVRQPVLRYVRPPVRALHRGSVRRAAEKNPLNSRARAVEQQYITELDKADALMLRKSHETGFLSWFRNGLLATGIGVIAFVQSDVGREAGYAFFILGGMCVSFGGASYVTSLLSLRRIMLLSLPAVLLHTAVVSSAALFWLCAVSLYIGRLEVEIIHDEDDEEHGADESSECAECRARRDREKGQDK</sequence>
<proteinExistence type="evidence at transcript level"/>
<feature type="transit peptide" description="Mitochondrion" evidence="2">
    <location>
        <begin position="1"/>
        <end position="45"/>
    </location>
</feature>
<feature type="chain" id="PRO_0000360430" description="Transmembrane protein 160" evidence="2">
    <location>
        <begin position="46"/>
        <end position="208"/>
    </location>
</feature>
<feature type="transmembrane region" description="Helical" evidence="2">
    <location>
        <begin position="82"/>
        <end position="102"/>
    </location>
</feature>
<feature type="transmembrane region" description="Helical" evidence="2">
    <location>
        <begin position="110"/>
        <end position="130"/>
    </location>
</feature>
<feature type="transmembrane region" description="Helical" evidence="2">
    <location>
        <begin position="147"/>
        <end position="167"/>
    </location>
</feature>
<feature type="region of interest" description="Disordered" evidence="3">
    <location>
        <begin position="181"/>
        <end position="208"/>
    </location>
</feature>
<feature type="compositionally biased region" description="Acidic residues" evidence="3">
    <location>
        <begin position="181"/>
        <end position="192"/>
    </location>
</feature>
<feature type="compositionally biased region" description="Basic and acidic residues" evidence="3">
    <location>
        <begin position="194"/>
        <end position="208"/>
    </location>
</feature>
<gene>
    <name evidence="1" type="primary">tmem160</name>
    <name type="ORF">si:ch211-113p18.5</name>
</gene>
<organism>
    <name type="scientific">Danio rerio</name>
    <name type="common">Zebrafish</name>
    <name type="synonym">Brachydanio rerio</name>
    <dbReference type="NCBI Taxonomy" id="7955"/>
    <lineage>
        <taxon>Eukaryota</taxon>
        <taxon>Metazoa</taxon>
        <taxon>Chordata</taxon>
        <taxon>Craniata</taxon>
        <taxon>Vertebrata</taxon>
        <taxon>Euteleostomi</taxon>
        <taxon>Actinopterygii</taxon>
        <taxon>Neopterygii</taxon>
        <taxon>Teleostei</taxon>
        <taxon>Ostariophysi</taxon>
        <taxon>Cypriniformes</taxon>
        <taxon>Danionidae</taxon>
        <taxon>Danioninae</taxon>
        <taxon>Danio</taxon>
    </lineage>
</organism>
<reference key="1">
    <citation type="submission" date="2008-04" db="EMBL/GenBank/DDBJ databases">
        <authorList>
            <consortium name="NIH - Zebrafish Gene Collection (ZGC) project"/>
        </authorList>
    </citation>
    <scope>NUCLEOTIDE SEQUENCE [LARGE SCALE MRNA]</scope>
</reference>
<protein>
    <recommendedName>
        <fullName evidence="1">Transmembrane protein 160</fullName>
    </recommendedName>
</protein>